<gene>
    <name evidence="1" type="primary">rnhA</name>
    <name type="ordered locus">RF_0180</name>
</gene>
<protein>
    <recommendedName>
        <fullName evidence="1">Ribonuclease H</fullName>
        <shortName evidence="1">RNase H</shortName>
        <ecNumber evidence="1">3.1.26.4</ecNumber>
    </recommendedName>
</protein>
<dbReference type="EC" id="3.1.26.4" evidence="1"/>
<dbReference type="EMBL" id="CP000053">
    <property type="protein sequence ID" value="AAY61031.1"/>
    <property type="molecule type" value="Genomic_DNA"/>
</dbReference>
<dbReference type="SMR" id="Q4UN27"/>
<dbReference type="STRING" id="315456.RF_0180"/>
<dbReference type="KEGG" id="rfe:RF_0180"/>
<dbReference type="eggNOG" id="COG0328">
    <property type="taxonomic scope" value="Bacteria"/>
</dbReference>
<dbReference type="HOGENOM" id="CLU_030894_6_0_5"/>
<dbReference type="OrthoDB" id="7845843at2"/>
<dbReference type="Proteomes" id="UP000008548">
    <property type="component" value="Chromosome"/>
</dbReference>
<dbReference type="GO" id="GO:0005737">
    <property type="term" value="C:cytoplasm"/>
    <property type="evidence" value="ECO:0007669"/>
    <property type="project" value="UniProtKB-SubCell"/>
</dbReference>
<dbReference type="GO" id="GO:0000287">
    <property type="term" value="F:magnesium ion binding"/>
    <property type="evidence" value="ECO:0007669"/>
    <property type="project" value="UniProtKB-UniRule"/>
</dbReference>
<dbReference type="GO" id="GO:0003676">
    <property type="term" value="F:nucleic acid binding"/>
    <property type="evidence" value="ECO:0007669"/>
    <property type="project" value="InterPro"/>
</dbReference>
<dbReference type="GO" id="GO:0004523">
    <property type="term" value="F:RNA-DNA hybrid ribonuclease activity"/>
    <property type="evidence" value="ECO:0007669"/>
    <property type="project" value="UniProtKB-UniRule"/>
</dbReference>
<dbReference type="GO" id="GO:0043137">
    <property type="term" value="P:DNA replication, removal of RNA primer"/>
    <property type="evidence" value="ECO:0007669"/>
    <property type="project" value="TreeGrafter"/>
</dbReference>
<dbReference type="CDD" id="cd09278">
    <property type="entry name" value="RNase_HI_prokaryote_like"/>
    <property type="match status" value="1"/>
</dbReference>
<dbReference type="FunFam" id="3.30.420.10:FF:000089">
    <property type="entry name" value="Ribonuclease H"/>
    <property type="match status" value="1"/>
</dbReference>
<dbReference type="Gene3D" id="3.30.420.10">
    <property type="entry name" value="Ribonuclease H-like superfamily/Ribonuclease H"/>
    <property type="match status" value="1"/>
</dbReference>
<dbReference type="HAMAP" id="MF_00042">
    <property type="entry name" value="RNase_H"/>
    <property type="match status" value="1"/>
</dbReference>
<dbReference type="InterPro" id="IPR050092">
    <property type="entry name" value="RNase_H"/>
</dbReference>
<dbReference type="InterPro" id="IPR012337">
    <property type="entry name" value="RNaseH-like_sf"/>
</dbReference>
<dbReference type="InterPro" id="IPR002156">
    <property type="entry name" value="RNaseH_domain"/>
</dbReference>
<dbReference type="InterPro" id="IPR036397">
    <property type="entry name" value="RNaseH_sf"/>
</dbReference>
<dbReference type="InterPro" id="IPR022892">
    <property type="entry name" value="RNaseHI"/>
</dbReference>
<dbReference type="NCBIfam" id="NF001236">
    <property type="entry name" value="PRK00203.1"/>
    <property type="match status" value="1"/>
</dbReference>
<dbReference type="PANTHER" id="PTHR10642">
    <property type="entry name" value="RIBONUCLEASE H1"/>
    <property type="match status" value="1"/>
</dbReference>
<dbReference type="PANTHER" id="PTHR10642:SF26">
    <property type="entry name" value="RIBONUCLEASE H1"/>
    <property type="match status" value="1"/>
</dbReference>
<dbReference type="Pfam" id="PF00075">
    <property type="entry name" value="RNase_H"/>
    <property type="match status" value="1"/>
</dbReference>
<dbReference type="SUPFAM" id="SSF53098">
    <property type="entry name" value="Ribonuclease H-like"/>
    <property type="match status" value="1"/>
</dbReference>
<dbReference type="PROSITE" id="PS50879">
    <property type="entry name" value="RNASE_H_1"/>
    <property type="match status" value="1"/>
</dbReference>
<reference key="1">
    <citation type="journal article" date="2005" name="PLoS Biol.">
        <title>The genome sequence of Rickettsia felis identifies the first putative conjugative plasmid in an obligate intracellular parasite.</title>
        <authorList>
            <person name="Ogata H."/>
            <person name="Renesto P."/>
            <person name="Audic S."/>
            <person name="Robert C."/>
            <person name="Blanc G."/>
            <person name="Fournier P.-E."/>
            <person name="Parinello H."/>
            <person name="Claverie J.-M."/>
            <person name="Raoult D."/>
        </authorList>
    </citation>
    <scope>NUCLEOTIDE SEQUENCE [LARGE SCALE GENOMIC DNA]</scope>
    <source>
        <strain>ATCC VR-1525 / URRWXCal2</strain>
    </source>
</reference>
<accession>Q4UN27</accession>
<name>RNH_RICFE</name>
<organism>
    <name type="scientific">Rickettsia felis (strain ATCC VR-1525 / URRWXCal2)</name>
    <name type="common">Rickettsia azadi</name>
    <dbReference type="NCBI Taxonomy" id="315456"/>
    <lineage>
        <taxon>Bacteria</taxon>
        <taxon>Pseudomonadati</taxon>
        <taxon>Pseudomonadota</taxon>
        <taxon>Alphaproteobacteria</taxon>
        <taxon>Rickettsiales</taxon>
        <taxon>Rickettsiaceae</taxon>
        <taxon>Rickettsieae</taxon>
        <taxon>Rickettsia</taxon>
        <taxon>spotted fever group</taxon>
    </lineage>
</organism>
<feature type="chain" id="PRO_0000195397" description="Ribonuclease H">
    <location>
        <begin position="1"/>
        <end position="152"/>
    </location>
</feature>
<feature type="domain" description="RNase H type-1" evidence="2">
    <location>
        <begin position="1"/>
        <end position="142"/>
    </location>
</feature>
<feature type="binding site" evidence="1">
    <location>
        <position position="10"/>
    </location>
    <ligand>
        <name>Mg(2+)</name>
        <dbReference type="ChEBI" id="CHEBI:18420"/>
        <label>1</label>
    </ligand>
</feature>
<feature type="binding site" evidence="1">
    <location>
        <position position="10"/>
    </location>
    <ligand>
        <name>Mg(2+)</name>
        <dbReference type="ChEBI" id="CHEBI:18420"/>
        <label>2</label>
    </ligand>
</feature>
<feature type="binding site" evidence="1">
    <location>
        <position position="48"/>
    </location>
    <ligand>
        <name>Mg(2+)</name>
        <dbReference type="ChEBI" id="CHEBI:18420"/>
        <label>1</label>
    </ligand>
</feature>
<feature type="binding site" evidence="1">
    <location>
        <position position="70"/>
    </location>
    <ligand>
        <name>Mg(2+)</name>
        <dbReference type="ChEBI" id="CHEBI:18420"/>
        <label>1</label>
    </ligand>
</feature>
<feature type="binding site" evidence="1">
    <location>
        <position position="134"/>
    </location>
    <ligand>
        <name>Mg(2+)</name>
        <dbReference type="ChEBI" id="CHEBI:18420"/>
        <label>2</label>
    </ligand>
</feature>
<sequence length="152" mass="17057">MDSKVVIYTDGACAGNPGPGGWGALLQFNDTSKEIFGYELDTTNNRMEITAALEALRILKKSCNVEIYTDSKYLQQGITAWIHNWIKNNWCKSNNEPVKNADLWQKLYAELSKHTIIWKWVKGHANNSGNIAADKLAVQGRETAIEILKCRG</sequence>
<keyword id="KW-0963">Cytoplasm</keyword>
<keyword id="KW-0255">Endonuclease</keyword>
<keyword id="KW-0378">Hydrolase</keyword>
<keyword id="KW-0460">Magnesium</keyword>
<keyword id="KW-0479">Metal-binding</keyword>
<keyword id="KW-0540">Nuclease</keyword>
<proteinExistence type="inferred from homology"/>
<evidence type="ECO:0000255" key="1">
    <source>
        <dbReference type="HAMAP-Rule" id="MF_00042"/>
    </source>
</evidence>
<evidence type="ECO:0000255" key="2">
    <source>
        <dbReference type="PROSITE-ProRule" id="PRU00408"/>
    </source>
</evidence>
<comment type="function">
    <text evidence="1">Endonuclease that specifically degrades the RNA of RNA-DNA hybrids.</text>
</comment>
<comment type="catalytic activity">
    <reaction evidence="1">
        <text>Endonucleolytic cleavage to 5'-phosphomonoester.</text>
        <dbReference type="EC" id="3.1.26.4"/>
    </reaction>
</comment>
<comment type="cofactor">
    <cofactor evidence="1">
        <name>Mg(2+)</name>
        <dbReference type="ChEBI" id="CHEBI:18420"/>
    </cofactor>
    <text evidence="1">Binds 1 Mg(2+) ion per subunit. May bind a second metal ion at a regulatory site, or after substrate binding.</text>
</comment>
<comment type="subunit">
    <text evidence="1">Monomer.</text>
</comment>
<comment type="subcellular location">
    <subcellularLocation>
        <location evidence="1">Cytoplasm</location>
    </subcellularLocation>
</comment>
<comment type="similarity">
    <text evidence="1">Belongs to the RNase H family.</text>
</comment>